<name>HSP1_NEOBU</name>
<organism>
    <name type="scientific">Neoromicia brunneus</name>
    <name type="common">Dark-brown serotine bat</name>
    <name type="synonym">Eptesicus brunneus</name>
    <dbReference type="NCBI Taxonomy" id="2778567"/>
    <lineage>
        <taxon>Eukaryota</taxon>
        <taxon>Metazoa</taxon>
        <taxon>Chordata</taxon>
        <taxon>Craniata</taxon>
        <taxon>Vertebrata</taxon>
        <taxon>Euteleostomi</taxon>
        <taxon>Mammalia</taxon>
        <taxon>Eutheria</taxon>
        <taxon>Laurasiatheria</taxon>
        <taxon>Chiroptera</taxon>
        <taxon>Yangochiroptera</taxon>
        <taxon>Vespertilionidae</taxon>
        <taxon>Pseudoromicia</taxon>
    </lineage>
</organism>
<keyword id="KW-0158">Chromosome</keyword>
<keyword id="KW-0217">Developmental protein</keyword>
<keyword id="KW-0221">Differentiation</keyword>
<keyword id="KW-0226">DNA condensation</keyword>
<keyword id="KW-0238">DNA-binding</keyword>
<keyword id="KW-0544">Nucleosome core</keyword>
<keyword id="KW-0539">Nucleus</keyword>
<keyword id="KW-0744">Spermatogenesis</keyword>
<dbReference type="EMBL" id="AF435941">
    <property type="protein sequence ID" value="AAL35575.1"/>
    <property type="molecule type" value="Genomic_DNA"/>
</dbReference>
<dbReference type="GO" id="GO:0000786">
    <property type="term" value="C:nucleosome"/>
    <property type="evidence" value="ECO:0007669"/>
    <property type="project" value="UniProtKB-KW"/>
</dbReference>
<dbReference type="GO" id="GO:0005634">
    <property type="term" value="C:nucleus"/>
    <property type="evidence" value="ECO:0007669"/>
    <property type="project" value="UniProtKB-SubCell"/>
</dbReference>
<dbReference type="GO" id="GO:0003677">
    <property type="term" value="F:DNA binding"/>
    <property type="evidence" value="ECO:0007669"/>
    <property type="project" value="UniProtKB-KW"/>
</dbReference>
<dbReference type="GO" id="GO:0030154">
    <property type="term" value="P:cell differentiation"/>
    <property type="evidence" value="ECO:0007669"/>
    <property type="project" value="UniProtKB-KW"/>
</dbReference>
<dbReference type="GO" id="GO:0030261">
    <property type="term" value="P:chromosome condensation"/>
    <property type="evidence" value="ECO:0007669"/>
    <property type="project" value="UniProtKB-KW"/>
</dbReference>
<dbReference type="GO" id="GO:0007283">
    <property type="term" value="P:spermatogenesis"/>
    <property type="evidence" value="ECO:0007669"/>
    <property type="project" value="UniProtKB-KW"/>
</dbReference>
<proteinExistence type="evidence at transcript level"/>
<accession>Q8WMD3</accession>
<reference key="1">
    <citation type="journal article" date="2002" name="Mol. Phylogenet. Evol.">
        <title>Characterization and phylogenetic utility of the mammalian protamine P1 gene.</title>
        <authorList>
            <person name="Van Den Bussche R.A."/>
            <person name="Hoofer S.R."/>
            <person name="Hansen E.W."/>
        </authorList>
    </citation>
    <scope>NUCLEOTIDE SEQUENCE [GENOMIC DNA]</scope>
</reference>
<gene>
    <name type="primary">PRM1</name>
</gene>
<comment type="function">
    <text evidence="1">Protamines substitute for histones in the chromatin of sperm during the haploid phase of spermatogenesis. They compact sperm DNA into a highly condensed, stable and inactive complex (By similarity).</text>
</comment>
<comment type="subcellular location">
    <subcellularLocation>
        <location evidence="1">Nucleus</location>
    </subcellularLocation>
    <subcellularLocation>
        <location evidence="1">Chromosome</location>
    </subcellularLocation>
</comment>
<comment type="tissue specificity">
    <text>Testis.</text>
</comment>
<comment type="similarity">
    <text evidence="2">Belongs to the protamine P1 family.</text>
</comment>
<feature type="chain" id="PRO_0000191475" description="Sperm protamine P1">
    <location>
        <begin position="1"/>
        <end position="46"/>
    </location>
</feature>
<evidence type="ECO:0000250" key="1"/>
<evidence type="ECO:0000305" key="2"/>
<sequence>MARYRRCRSRSRCRRRRRRCHRRRRRCCRRRRRRRACCRRYRCRRR</sequence>
<protein>
    <recommendedName>
        <fullName>Sperm protamine P1</fullName>
    </recommendedName>
</protein>